<keyword id="KW-0997">Cell inner membrane</keyword>
<keyword id="KW-1003">Cell membrane</keyword>
<keyword id="KW-0472">Membrane</keyword>
<keyword id="KW-1185">Reference proteome</keyword>
<keyword id="KW-0812">Transmembrane</keyword>
<keyword id="KW-1133">Transmembrane helix</keyword>
<keyword id="KW-0813">Transport</keyword>
<proteinExistence type="inferred from homology"/>
<reference key="1">
    <citation type="journal article" date="2008" name="Environ. Microbiol.">
        <title>The genome of Erwinia tasmaniensis strain Et1/99, a non-pathogenic bacterium in the genus Erwinia.</title>
        <authorList>
            <person name="Kube M."/>
            <person name="Migdoll A.M."/>
            <person name="Mueller I."/>
            <person name="Kuhl H."/>
            <person name="Beck A."/>
            <person name="Reinhardt R."/>
            <person name="Geider K."/>
        </authorList>
    </citation>
    <scope>NUCLEOTIDE SEQUENCE [LARGE SCALE GENOMIC DNA]</scope>
    <source>
        <strain>DSM 17950 / CFBP 7177 / CIP 109463 / NCPPB 4357 / Et1/99</strain>
    </source>
</reference>
<organism>
    <name type="scientific">Erwinia tasmaniensis (strain DSM 17950 / CFBP 7177 / CIP 109463 / NCPPB 4357 / Et1/99)</name>
    <dbReference type="NCBI Taxonomy" id="465817"/>
    <lineage>
        <taxon>Bacteria</taxon>
        <taxon>Pseudomonadati</taxon>
        <taxon>Pseudomonadota</taxon>
        <taxon>Gammaproteobacteria</taxon>
        <taxon>Enterobacterales</taxon>
        <taxon>Erwiniaceae</taxon>
        <taxon>Erwinia</taxon>
    </lineage>
</organism>
<dbReference type="EMBL" id="CU468135">
    <property type="protein sequence ID" value="CAO95339.1"/>
    <property type="molecule type" value="Genomic_DNA"/>
</dbReference>
<dbReference type="RefSeq" id="WP_012440057.1">
    <property type="nucleotide sequence ID" value="NC_010694.1"/>
</dbReference>
<dbReference type="SMR" id="B2VGW1"/>
<dbReference type="STRING" id="465817.ETA_02930"/>
<dbReference type="KEGG" id="eta:ETA_02930"/>
<dbReference type="eggNOG" id="COG1566">
    <property type="taxonomic scope" value="Bacteria"/>
</dbReference>
<dbReference type="HOGENOM" id="CLU_018816_15_2_6"/>
<dbReference type="OrthoDB" id="9811754at2"/>
<dbReference type="Proteomes" id="UP000001726">
    <property type="component" value="Chromosome"/>
</dbReference>
<dbReference type="GO" id="GO:0005886">
    <property type="term" value="C:plasma membrane"/>
    <property type="evidence" value="ECO:0007669"/>
    <property type="project" value="UniProtKB-SubCell"/>
</dbReference>
<dbReference type="GO" id="GO:0022857">
    <property type="term" value="F:transmembrane transporter activity"/>
    <property type="evidence" value="ECO:0007669"/>
    <property type="project" value="UniProtKB-UniRule"/>
</dbReference>
<dbReference type="Gene3D" id="2.40.30.170">
    <property type="match status" value="1"/>
</dbReference>
<dbReference type="Gene3D" id="2.40.50.100">
    <property type="match status" value="1"/>
</dbReference>
<dbReference type="Gene3D" id="1.10.287.470">
    <property type="entry name" value="Helix hairpin bin"/>
    <property type="match status" value="1"/>
</dbReference>
<dbReference type="HAMAP" id="MF_01544">
    <property type="entry name" value="AaeA"/>
    <property type="match status" value="1"/>
</dbReference>
<dbReference type="InterPro" id="IPR043602">
    <property type="entry name" value="CusB-like_dom_1"/>
</dbReference>
<dbReference type="InterPro" id="IPR032317">
    <property type="entry name" value="CusB_D23"/>
</dbReference>
<dbReference type="InterPro" id="IPR050393">
    <property type="entry name" value="MFP_Efflux_Pump"/>
</dbReference>
<dbReference type="InterPro" id="IPR022871">
    <property type="entry name" value="PHBA_efflux_pump_AaeA"/>
</dbReference>
<dbReference type="InterPro" id="IPR006143">
    <property type="entry name" value="RND_pump_MFP"/>
</dbReference>
<dbReference type="NCBIfam" id="NF007850">
    <property type="entry name" value="PRK10559.1"/>
    <property type="match status" value="1"/>
</dbReference>
<dbReference type="NCBIfam" id="TIGR01730">
    <property type="entry name" value="RND_mfp"/>
    <property type="match status" value="1"/>
</dbReference>
<dbReference type="PANTHER" id="PTHR30367:SF12">
    <property type="entry name" value="P-HYDROXYBENZOIC ACID EFFLUX PUMP SUBUNIT AAEA"/>
    <property type="match status" value="1"/>
</dbReference>
<dbReference type="PANTHER" id="PTHR30367">
    <property type="entry name" value="P-HYDROXYBENZOIC ACID EFFLUX PUMP SUBUNIT AAEA-RELATED"/>
    <property type="match status" value="1"/>
</dbReference>
<dbReference type="Pfam" id="PF00529">
    <property type="entry name" value="CusB_dom_1"/>
    <property type="match status" value="1"/>
</dbReference>
<dbReference type="Pfam" id="PF16576">
    <property type="entry name" value="HlyD_D23"/>
    <property type="match status" value="1"/>
</dbReference>
<dbReference type="SUPFAM" id="SSF111369">
    <property type="entry name" value="HlyD-like secretion proteins"/>
    <property type="match status" value="1"/>
</dbReference>
<name>AAEA_ERWT9</name>
<gene>
    <name evidence="1" type="primary">aaeA</name>
    <name type="ordered locus">ETA_02930</name>
</gene>
<evidence type="ECO:0000255" key="1">
    <source>
        <dbReference type="HAMAP-Rule" id="MF_01544"/>
    </source>
</evidence>
<accession>B2VGW1</accession>
<sequence>MKTLTRKISRTVITLLLVIIAIVLIFRIWVFYTESPWTRDAKFTADVVAIAPDVSGLISEVRVRDNQLVQKDQVLFTIDPPRYQKALDEAQADVAYYQAVMGEKRREAARRNQLGVSAMSREAIEQANNDYQTTEHQLAKAVASRDLAQLDLERTVVKAPSAGWVTNLNVYTGEFITRGSTSVALVKQNSFYVLAYLEETKLEGIRPGYRVEITPLGSNQVLRGSVDSIAAGVTNSSSTVDSKGMATIDSNLEWVRLAQRVPVRIHLDSQPGNQYPSGTTATVVVTGAQDRKDNDMPPLMKLIHRLREFG</sequence>
<feature type="chain" id="PRO_1000146719" description="p-hydroxybenzoic acid efflux pump subunit AaeA">
    <location>
        <begin position="1"/>
        <end position="310"/>
    </location>
</feature>
<feature type="transmembrane region" description="Helical" evidence="1">
    <location>
        <begin position="12"/>
        <end position="32"/>
    </location>
</feature>
<protein>
    <recommendedName>
        <fullName evidence="1">p-hydroxybenzoic acid efflux pump subunit AaeA</fullName>
        <shortName evidence="1">pHBA efflux pump protein A</shortName>
    </recommendedName>
</protein>
<comment type="function">
    <text evidence="1">Forms an efflux pump with AaeB.</text>
</comment>
<comment type="subcellular location">
    <subcellularLocation>
        <location evidence="1">Cell inner membrane</location>
        <topology evidence="1">Single-pass membrane protein</topology>
    </subcellularLocation>
</comment>
<comment type="similarity">
    <text evidence="1">Belongs to the membrane fusion protein (MFP) (TC 8.A.1) family.</text>
</comment>